<dbReference type="EMBL" id="AF003959">
    <property type="protein sequence ID" value="AAC32309.1"/>
    <property type="molecule type" value="Genomic_DNA"/>
</dbReference>
<dbReference type="EMBL" id="CP002188">
    <property type="protein sequence ID" value="ADR25362.1"/>
    <property type="molecule type" value="Genomic_DNA"/>
</dbReference>
<dbReference type="RefSeq" id="WP_013456570.1">
    <property type="nucleotide sequence ID" value="NC_014760.1"/>
</dbReference>
<dbReference type="SMR" id="O84898"/>
<dbReference type="GeneID" id="31507669"/>
<dbReference type="KEGG" id="mbv:MBOVPG45_0314"/>
<dbReference type="eggNOG" id="COG0322">
    <property type="taxonomic scope" value="Bacteria"/>
</dbReference>
<dbReference type="HOGENOM" id="CLU_014841_3_2_14"/>
<dbReference type="OrthoDB" id="9804933at2"/>
<dbReference type="Proteomes" id="UP000008713">
    <property type="component" value="Chromosome"/>
</dbReference>
<dbReference type="GO" id="GO:0005737">
    <property type="term" value="C:cytoplasm"/>
    <property type="evidence" value="ECO:0007669"/>
    <property type="project" value="UniProtKB-SubCell"/>
</dbReference>
<dbReference type="GO" id="GO:0009380">
    <property type="term" value="C:excinuclease repair complex"/>
    <property type="evidence" value="ECO:0007669"/>
    <property type="project" value="InterPro"/>
</dbReference>
<dbReference type="GO" id="GO:0003677">
    <property type="term" value="F:DNA binding"/>
    <property type="evidence" value="ECO:0007669"/>
    <property type="project" value="UniProtKB-UniRule"/>
</dbReference>
<dbReference type="GO" id="GO:0009381">
    <property type="term" value="F:excinuclease ABC activity"/>
    <property type="evidence" value="ECO:0007669"/>
    <property type="project" value="UniProtKB-UniRule"/>
</dbReference>
<dbReference type="GO" id="GO:0006289">
    <property type="term" value="P:nucleotide-excision repair"/>
    <property type="evidence" value="ECO:0007669"/>
    <property type="project" value="UniProtKB-UniRule"/>
</dbReference>
<dbReference type="GO" id="GO:0009432">
    <property type="term" value="P:SOS response"/>
    <property type="evidence" value="ECO:0007669"/>
    <property type="project" value="UniProtKB-UniRule"/>
</dbReference>
<dbReference type="CDD" id="cd10434">
    <property type="entry name" value="GIY-YIG_UvrC_Cho"/>
    <property type="match status" value="1"/>
</dbReference>
<dbReference type="FunFam" id="3.40.1440.10:FF:000001">
    <property type="entry name" value="UvrABC system protein C"/>
    <property type="match status" value="1"/>
</dbReference>
<dbReference type="Gene3D" id="1.10.150.20">
    <property type="entry name" value="5' to 3' exonuclease, C-terminal subdomain"/>
    <property type="match status" value="1"/>
</dbReference>
<dbReference type="Gene3D" id="3.40.1440.10">
    <property type="entry name" value="GIY-YIG endonuclease"/>
    <property type="match status" value="1"/>
</dbReference>
<dbReference type="Gene3D" id="4.10.860.10">
    <property type="entry name" value="UVR domain"/>
    <property type="match status" value="1"/>
</dbReference>
<dbReference type="Gene3D" id="3.30.420.340">
    <property type="entry name" value="UvrC, RNAse H endonuclease domain"/>
    <property type="match status" value="1"/>
</dbReference>
<dbReference type="HAMAP" id="MF_00203">
    <property type="entry name" value="UvrC"/>
    <property type="match status" value="1"/>
</dbReference>
<dbReference type="InterPro" id="IPR000305">
    <property type="entry name" value="GIY-YIG_endonuc"/>
</dbReference>
<dbReference type="InterPro" id="IPR035901">
    <property type="entry name" value="GIY-YIG_endonuc_sf"/>
</dbReference>
<dbReference type="InterPro" id="IPR047296">
    <property type="entry name" value="GIY-YIG_UvrC_Cho"/>
</dbReference>
<dbReference type="InterPro" id="IPR010994">
    <property type="entry name" value="RuvA_2-like"/>
</dbReference>
<dbReference type="InterPro" id="IPR001943">
    <property type="entry name" value="UVR_dom"/>
</dbReference>
<dbReference type="InterPro" id="IPR036876">
    <property type="entry name" value="UVR_dom_sf"/>
</dbReference>
<dbReference type="InterPro" id="IPR050066">
    <property type="entry name" value="UvrABC_protein_C"/>
</dbReference>
<dbReference type="InterPro" id="IPR004791">
    <property type="entry name" value="UvrC"/>
</dbReference>
<dbReference type="InterPro" id="IPR001162">
    <property type="entry name" value="UvrC_RNase_H_dom"/>
</dbReference>
<dbReference type="InterPro" id="IPR038476">
    <property type="entry name" value="UvrC_RNase_H_dom_sf"/>
</dbReference>
<dbReference type="PANTHER" id="PTHR30562:SF1">
    <property type="entry name" value="UVRABC SYSTEM PROTEIN C"/>
    <property type="match status" value="1"/>
</dbReference>
<dbReference type="PANTHER" id="PTHR30562">
    <property type="entry name" value="UVRC/OXIDOREDUCTASE"/>
    <property type="match status" value="1"/>
</dbReference>
<dbReference type="Pfam" id="PF01541">
    <property type="entry name" value="GIY-YIG"/>
    <property type="match status" value="1"/>
</dbReference>
<dbReference type="Pfam" id="PF14520">
    <property type="entry name" value="HHH_5"/>
    <property type="match status" value="1"/>
</dbReference>
<dbReference type="Pfam" id="PF02151">
    <property type="entry name" value="UVR"/>
    <property type="match status" value="1"/>
</dbReference>
<dbReference type="Pfam" id="PF22920">
    <property type="entry name" value="UvrC_RNaseH"/>
    <property type="match status" value="1"/>
</dbReference>
<dbReference type="Pfam" id="PF08459">
    <property type="entry name" value="UvrC_RNaseH_dom"/>
    <property type="match status" value="1"/>
</dbReference>
<dbReference type="SMART" id="SM00465">
    <property type="entry name" value="GIYc"/>
    <property type="match status" value="1"/>
</dbReference>
<dbReference type="SUPFAM" id="SSF46600">
    <property type="entry name" value="C-terminal UvrC-binding domain of UvrB"/>
    <property type="match status" value="1"/>
</dbReference>
<dbReference type="SUPFAM" id="SSF82771">
    <property type="entry name" value="GIY-YIG endonuclease"/>
    <property type="match status" value="1"/>
</dbReference>
<dbReference type="SUPFAM" id="SSF47781">
    <property type="entry name" value="RuvA domain 2-like"/>
    <property type="match status" value="1"/>
</dbReference>
<dbReference type="PROSITE" id="PS50164">
    <property type="entry name" value="GIY_YIG"/>
    <property type="match status" value="1"/>
</dbReference>
<dbReference type="PROSITE" id="PS50151">
    <property type="entry name" value="UVR"/>
    <property type="match status" value="1"/>
</dbReference>
<dbReference type="PROSITE" id="PS50165">
    <property type="entry name" value="UVRC"/>
    <property type="match status" value="1"/>
</dbReference>
<accession>O84898</accession>
<accession>E4PZM9</accession>
<keyword id="KW-0963">Cytoplasm</keyword>
<keyword id="KW-0227">DNA damage</keyword>
<keyword id="KW-0228">DNA excision</keyword>
<keyword id="KW-0234">DNA repair</keyword>
<keyword id="KW-0267">Excision nuclease</keyword>
<keyword id="KW-0742">SOS response</keyword>
<sequence>MDKNEIILMLKNVSTSPGVYLWKDAKQNVLYVGKAKNLRKRMLQYFDGAINSYKTNKLVSLIYDFDVYICKTNKEALLLEKAMIDRYNPEFNILLLDDRKYPYLKVQLLKDSLLINLSRKVNAKDSKNTFYYGPFPSGYGAKPILKLLQHETLYENGLLIKNKDYNFWINQFNKIKEILSFKNNNYINELTNKMHQAANNMQFELALFLRDGLTYLKKLKESQIIELSQYKNIDVFAYKTDEKLIFATVLFYRYGILINKVNLTIPLGLSVDESLRVFFEQFYEDKILPDNLIVQEELLNFDLNLSSEYKFISPKIGTNKKVLDLAILNLNDYYEKEHLVIKNQLDKASNMLDSLNKYLNLPKLKNIVVFDNSNINNINPVGVAIVYTNGIKNKSLYRKFNLEALNERSADVEYIKQSISKFFSSNKNTKDYDLVIADGGIQQVNEAKKTLKTLNINIPVIGLVKNEFHKTKALIDLDMNEIHINDLELYNYLVQIQVEVDRFAKSHFRNRQKISSLEGKLRNIKGLGPNMEQNLLNHFKSYAKIYDASVEELSKIVPLNIAKSIKNKDYE</sequence>
<organism>
    <name type="scientific">Mycoplasmopsis bovis (strain ATCC 25523 / DSM 22781 / NCTC 10131 / PG45)</name>
    <name type="common">Mycoplasma bovis</name>
    <dbReference type="NCBI Taxonomy" id="289397"/>
    <lineage>
        <taxon>Bacteria</taxon>
        <taxon>Bacillati</taxon>
        <taxon>Mycoplasmatota</taxon>
        <taxon>Mycoplasmoidales</taxon>
        <taxon>Metamycoplasmataceae</taxon>
        <taxon>Mycoplasmopsis</taxon>
    </lineage>
</organism>
<feature type="chain" id="PRO_0000138316" description="UvrABC system protein C">
    <location>
        <begin position="1"/>
        <end position="571"/>
    </location>
</feature>
<feature type="domain" description="GIY-YIG" evidence="1">
    <location>
        <begin position="15"/>
        <end position="93"/>
    </location>
</feature>
<feature type="domain" description="UVR" evidence="1">
    <location>
        <begin position="184"/>
        <end position="219"/>
    </location>
</feature>
<name>UVRC_MYCBG</name>
<protein>
    <recommendedName>
        <fullName evidence="1">UvrABC system protein C</fullName>
        <shortName evidence="1">Protein UvrC</shortName>
    </recommendedName>
    <alternativeName>
        <fullName evidence="1">Excinuclease ABC subunit C</fullName>
    </alternativeName>
</protein>
<reference key="1">
    <citation type="journal article" date="1998" name="Mol. Cell. Probes">
        <title>Species identification of Mycoplasma bovis and Mycoplasma agalactiae based on the uvrC genes by PCR.</title>
        <authorList>
            <person name="Subramaniam S."/>
            <person name="Bergonier D."/>
            <person name="Poumarat F."/>
            <person name="Capaul S."/>
            <person name="Schlatter Y."/>
            <person name="Nicolet J."/>
            <person name="Frey J."/>
        </authorList>
    </citation>
    <scope>NUCLEOTIDE SEQUENCE [GENOMIC DNA]</scope>
    <source>
        <strain>ATCC 25523 / DSM 22781 / NCTC 10131 / PG45</strain>
    </source>
</reference>
<reference key="2">
    <citation type="journal article" date="2011" name="Infect. Immun.">
        <title>Complete genome sequence of Mycoplasma bovis type strain PG45 (ATCC 25523).</title>
        <authorList>
            <person name="Wise K.S."/>
            <person name="Calcutt M.J."/>
            <person name="Foecking M.F."/>
            <person name="Roske K."/>
            <person name="Madupu R."/>
            <person name="Methe B.A."/>
        </authorList>
    </citation>
    <scope>NUCLEOTIDE SEQUENCE [LARGE SCALE GENOMIC DNA]</scope>
    <source>
        <strain>ATCC 25523 / DSM 22781 / NCTC 10131 / PG45</strain>
    </source>
</reference>
<comment type="function">
    <text evidence="1">The UvrABC repair system catalyzes the recognition and processing of DNA lesions. UvrC both incises the 5' and 3' sides of the lesion. The N-terminal half is responsible for the 3' incision and the C-terminal half is responsible for the 5' incision.</text>
</comment>
<comment type="subunit">
    <text evidence="1">Interacts with UvrB in an incision complex.</text>
</comment>
<comment type="subcellular location">
    <subcellularLocation>
        <location evidence="1">Cytoplasm</location>
    </subcellularLocation>
</comment>
<comment type="similarity">
    <text evidence="1">Belongs to the UvrC family.</text>
</comment>
<proteinExistence type="inferred from homology"/>
<gene>
    <name evidence="1" type="primary">uvrC</name>
    <name type="ordered locus">MBOVPG45_0314</name>
</gene>
<evidence type="ECO:0000255" key="1">
    <source>
        <dbReference type="HAMAP-Rule" id="MF_00203"/>
    </source>
</evidence>